<evidence type="ECO:0000250" key="1">
    <source>
        <dbReference type="UniProtKB" id="P0AC38"/>
    </source>
</evidence>
<evidence type="ECO:0000250" key="2">
    <source>
        <dbReference type="UniProtKB" id="Q9LCC6"/>
    </source>
</evidence>
<evidence type="ECO:0000305" key="3"/>
<gene>
    <name type="primary">aspA</name>
    <name type="ordered locus">Z5744</name>
    <name type="ordered locus">ECs5120</name>
</gene>
<proteinExistence type="inferred from homology"/>
<sequence length="478" mass="52356">MSNNIRIEEDLLGTREVPADAYYGVHTLRAIENFYISNNKISDIPEFVRGMVMVKKAAAMANKELQTIPKSVANAIIAACDEVLNNGKCMDQFPVDVYQGGAGTSVNMNTNEVLANIGLELMGHQKGEYQYLNPNDHVNKCQSTNDAYPTGFRIAVYSSLIKLVDAINQLREGFERKAVEFQDILKMGRTQLQDAVPMTLGQEFRAFSILLKEEVKNIQRTAELLLEVNLGATAIGTGLNTPKEYSPLAVKKLAEVTGFPCVPAEDLIEATSDCGAYVMVHGALKRLAVKMSKICNDLRLLSSGPRAGLNEINLPELQAGSSIMPAKVNPVVPEVVNQVCFKVIGNDTTVTMAAEAGQLQLNVMEPVIGQAMFESVHILTNACYNLLEKCINGITANKEVCEGYVYNSIGIVTYLNPFIGHHNGDIVGKICAETGKSVREVVLERGLLTEAELDDIFSVQNLMHPAYKAKRYTDESEQ</sequence>
<comment type="function">
    <text evidence="1">Catalyzes the reversible conversion of L-aspartate to fumarate and ammonia.</text>
</comment>
<comment type="catalytic activity">
    <reaction evidence="1">
        <text>L-aspartate = fumarate + NH4(+)</text>
        <dbReference type="Rhea" id="RHEA:16601"/>
        <dbReference type="ChEBI" id="CHEBI:28938"/>
        <dbReference type="ChEBI" id="CHEBI:29806"/>
        <dbReference type="ChEBI" id="CHEBI:29991"/>
        <dbReference type="EC" id="4.3.1.1"/>
    </reaction>
</comment>
<comment type="subunit">
    <text evidence="1">Homotetramer.</text>
</comment>
<comment type="similarity">
    <text evidence="3">Belongs to the class-II fumarase/aspartase family. Aspartase subfamily.</text>
</comment>
<comment type="sequence caution" evidence="3">
    <conflict type="erroneous initiation">
        <sequence resource="EMBL-CDS" id="AAG59338"/>
    </conflict>
    <text>Extended N-terminus.</text>
</comment>
<name>ASPA_ECO57</name>
<feature type="chain" id="PRO_0000161339" description="Aspartate ammonia-lyase">
    <location>
        <begin position="1"/>
        <end position="478"/>
    </location>
</feature>
<feature type="region of interest" description="SS loop" evidence="2">
    <location>
        <begin position="320"/>
        <end position="329"/>
    </location>
</feature>
<feature type="active site" description="Proton acceptor" evidence="2">
    <location>
        <position position="321"/>
    </location>
</feature>
<feature type="binding site" evidence="2">
    <location>
        <position position="104"/>
    </location>
    <ligand>
        <name>L-aspartate</name>
        <dbReference type="ChEBI" id="CHEBI:29991"/>
    </ligand>
</feature>
<feature type="binding site" evidence="2">
    <location>
        <position position="143"/>
    </location>
    <ligand>
        <name>L-aspartate</name>
        <dbReference type="ChEBI" id="CHEBI:29991"/>
    </ligand>
</feature>
<feature type="binding site" evidence="2">
    <location>
        <position position="144"/>
    </location>
    <ligand>
        <name>L-aspartate</name>
        <dbReference type="ChEBI" id="CHEBI:29991"/>
    </ligand>
</feature>
<feature type="binding site" evidence="2">
    <location>
        <position position="145"/>
    </location>
    <ligand>
        <name>L-aspartate</name>
        <dbReference type="ChEBI" id="CHEBI:29991"/>
    </ligand>
</feature>
<feature type="binding site" evidence="2">
    <location>
        <position position="190"/>
    </location>
    <ligand>
        <name>L-aspartate</name>
        <dbReference type="ChEBI" id="CHEBI:29991"/>
    </ligand>
</feature>
<feature type="binding site" evidence="2">
    <location>
        <position position="322"/>
    </location>
    <ligand>
        <name>L-aspartate</name>
        <dbReference type="ChEBI" id="CHEBI:29991"/>
    </ligand>
</feature>
<feature type="binding site" evidence="2">
    <location>
        <position position="327"/>
    </location>
    <ligand>
        <name>L-aspartate</name>
        <dbReference type="ChEBI" id="CHEBI:29991"/>
    </ligand>
</feature>
<keyword id="KW-0456">Lyase</keyword>
<keyword id="KW-1185">Reference proteome</keyword>
<protein>
    <recommendedName>
        <fullName evidence="1">Aspartate ammonia-lyase</fullName>
        <shortName evidence="1">Aspartase</shortName>
        <ecNumber evidence="1">4.3.1.1</ecNumber>
    </recommendedName>
</protein>
<accession>Q8XDS0</accession>
<accession>Q7A8X2</accession>
<organism>
    <name type="scientific">Escherichia coli O157:H7</name>
    <dbReference type="NCBI Taxonomy" id="83334"/>
    <lineage>
        <taxon>Bacteria</taxon>
        <taxon>Pseudomonadati</taxon>
        <taxon>Pseudomonadota</taxon>
        <taxon>Gammaproteobacteria</taxon>
        <taxon>Enterobacterales</taxon>
        <taxon>Enterobacteriaceae</taxon>
        <taxon>Escherichia</taxon>
    </lineage>
</organism>
<dbReference type="EC" id="4.3.1.1" evidence="1"/>
<dbReference type="EMBL" id="AE005174">
    <property type="protein sequence ID" value="AAG59338.1"/>
    <property type="status" value="ALT_INIT"/>
    <property type="molecule type" value="Genomic_DNA"/>
</dbReference>
<dbReference type="EMBL" id="BA000007">
    <property type="protein sequence ID" value="BAB38543.2"/>
    <property type="molecule type" value="Genomic_DNA"/>
</dbReference>
<dbReference type="PIR" id="F86109">
    <property type="entry name" value="F86109"/>
</dbReference>
<dbReference type="PIR" id="H91268">
    <property type="entry name" value="H91268"/>
</dbReference>
<dbReference type="RefSeq" id="NP_313147.2">
    <property type="nucleotide sequence ID" value="NC_002695.1"/>
</dbReference>
<dbReference type="RefSeq" id="WP_000069437.1">
    <property type="nucleotide sequence ID" value="NZ_VOAI01000008.1"/>
</dbReference>
<dbReference type="SMR" id="Q8XDS0"/>
<dbReference type="STRING" id="155864.Z5744"/>
<dbReference type="GeneID" id="914128"/>
<dbReference type="GeneID" id="93777685"/>
<dbReference type="KEGG" id="ece:Z5744"/>
<dbReference type="KEGG" id="ecs:ECs_5120"/>
<dbReference type="PATRIC" id="fig|386585.9.peg.5351"/>
<dbReference type="eggNOG" id="COG1027">
    <property type="taxonomic scope" value="Bacteria"/>
</dbReference>
<dbReference type="HOGENOM" id="CLU_021594_4_0_6"/>
<dbReference type="OMA" id="EICENYV"/>
<dbReference type="Proteomes" id="UP000000558">
    <property type="component" value="Chromosome"/>
</dbReference>
<dbReference type="Proteomes" id="UP000002519">
    <property type="component" value="Chromosome"/>
</dbReference>
<dbReference type="GO" id="GO:0005829">
    <property type="term" value="C:cytosol"/>
    <property type="evidence" value="ECO:0007669"/>
    <property type="project" value="TreeGrafter"/>
</dbReference>
<dbReference type="GO" id="GO:0008797">
    <property type="term" value="F:aspartate ammonia-lyase activity"/>
    <property type="evidence" value="ECO:0007669"/>
    <property type="project" value="UniProtKB-EC"/>
</dbReference>
<dbReference type="GO" id="GO:0006531">
    <property type="term" value="P:aspartate metabolic process"/>
    <property type="evidence" value="ECO:0007669"/>
    <property type="project" value="InterPro"/>
</dbReference>
<dbReference type="GO" id="GO:0006099">
    <property type="term" value="P:tricarboxylic acid cycle"/>
    <property type="evidence" value="ECO:0007669"/>
    <property type="project" value="InterPro"/>
</dbReference>
<dbReference type="CDD" id="cd01357">
    <property type="entry name" value="Aspartase"/>
    <property type="match status" value="1"/>
</dbReference>
<dbReference type="FunFam" id="1.10.40.30:FF:000003">
    <property type="entry name" value="Aspartate ammonia-lyase"/>
    <property type="match status" value="1"/>
</dbReference>
<dbReference type="FunFam" id="1.10.275.10:FF:000001">
    <property type="entry name" value="Fumarate hydratase, mitochondrial"/>
    <property type="match status" value="1"/>
</dbReference>
<dbReference type="FunFam" id="1.20.200.10:FF:000001">
    <property type="entry name" value="Fumarate hydratase, mitochondrial"/>
    <property type="match status" value="1"/>
</dbReference>
<dbReference type="Gene3D" id="1.10.40.30">
    <property type="entry name" value="Fumarase/aspartase (C-terminal domain)"/>
    <property type="match status" value="1"/>
</dbReference>
<dbReference type="Gene3D" id="1.20.200.10">
    <property type="entry name" value="Fumarase/aspartase (Central domain)"/>
    <property type="match status" value="1"/>
</dbReference>
<dbReference type="Gene3D" id="1.10.275.10">
    <property type="entry name" value="Fumarase/aspartase (N-terminal domain)"/>
    <property type="match status" value="1"/>
</dbReference>
<dbReference type="InterPro" id="IPR004708">
    <property type="entry name" value="ApsA"/>
</dbReference>
<dbReference type="InterPro" id="IPR051546">
    <property type="entry name" value="Aspartate_Ammonia-Lyase"/>
</dbReference>
<dbReference type="InterPro" id="IPR024083">
    <property type="entry name" value="Fumarase/histidase_N"/>
</dbReference>
<dbReference type="InterPro" id="IPR018951">
    <property type="entry name" value="Fumarase_C_C"/>
</dbReference>
<dbReference type="InterPro" id="IPR020557">
    <property type="entry name" value="Fumarate_lyase_CS"/>
</dbReference>
<dbReference type="InterPro" id="IPR000362">
    <property type="entry name" value="Fumarate_lyase_fam"/>
</dbReference>
<dbReference type="InterPro" id="IPR022761">
    <property type="entry name" value="Fumarate_lyase_N"/>
</dbReference>
<dbReference type="InterPro" id="IPR008948">
    <property type="entry name" value="L-Aspartase-like"/>
</dbReference>
<dbReference type="NCBIfam" id="TIGR00839">
    <property type="entry name" value="aspA"/>
    <property type="match status" value="1"/>
</dbReference>
<dbReference type="NCBIfam" id="NF008909">
    <property type="entry name" value="PRK12273.1"/>
    <property type="match status" value="1"/>
</dbReference>
<dbReference type="PANTHER" id="PTHR42696">
    <property type="entry name" value="ASPARTATE AMMONIA-LYASE"/>
    <property type="match status" value="1"/>
</dbReference>
<dbReference type="PANTHER" id="PTHR42696:SF2">
    <property type="entry name" value="ASPARTATE AMMONIA-LYASE"/>
    <property type="match status" value="1"/>
</dbReference>
<dbReference type="Pfam" id="PF10415">
    <property type="entry name" value="FumaraseC_C"/>
    <property type="match status" value="1"/>
</dbReference>
<dbReference type="Pfam" id="PF00206">
    <property type="entry name" value="Lyase_1"/>
    <property type="match status" value="1"/>
</dbReference>
<dbReference type="PRINTS" id="PR00145">
    <property type="entry name" value="ARGSUCLYASE"/>
</dbReference>
<dbReference type="PRINTS" id="PR00149">
    <property type="entry name" value="FUMRATELYASE"/>
</dbReference>
<dbReference type="SUPFAM" id="SSF48557">
    <property type="entry name" value="L-aspartase-like"/>
    <property type="match status" value="1"/>
</dbReference>
<dbReference type="PROSITE" id="PS00163">
    <property type="entry name" value="FUMARATE_LYASES"/>
    <property type="match status" value="1"/>
</dbReference>
<reference key="1">
    <citation type="journal article" date="2001" name="Nature">
        <title>Genome sequence of enterohaemorrhagic Escherichia coli O157:H7.</title>
        <authorList>
            <person name="Perna N.T."/>
            <person name="Plunkett G. III"/>
            <person name="Burland V."/>
            <person name="Mau B."/>
            <person name="Glasner J.D."/>
            <person name="Rose D.J."/>
            <person name="Mayhew G.F."/>
            <person name="Evans P.S."/>
            <person name="Gregor J."/>
            <person name="Kirkpatrick H.A."/>
            <person name="Posfai G."/>
            <person name="Hackett J."/>
            <person name="Klink S."/>
            <person name="Boutin A."/>
            <person name="Shao Y."/>
            <person name="Miller L."/>
            <person name="Grotbeck E.J."/>
            <person name="Davis N.W."/>
            <person name="Lim A."/>
            <person name="Dimalanta E.T."/>
            <person name="Potamousis K."/>
            <person name="Apodaca J."/>
            <person name="Anantharaman T.S."/>
            <person name="Lin J."/>
            <person name="Yen G."/>
            <person name="Schwartz D.C."/>
            <person name="Welch R.A."/>
            <person name="Blattner F.R."/>
        </authorList>
    </citation>
    <scope>NUCLEOTIDE SEQUENCE [LARGE SCALE GENOMIC DNA]</scope>
    <source>
        <strain>O157:H7 / EDL933 / ATCC 700927 / EHEC</strain>
    </source>
</reference>
<reference key="2">
    <citation type="journal article" date="2001" name="DNA Res.">
        <title>Complete genome sequence of enterohemorrhagic Escherichia coli O157:H7 and genomic comparison with a laboratory strain K-12.</title>
        <authorList>
            <person name="Hayashi T."/>
            <person name="Makino K."/>
            <person name="Ohnishi M."/>
            <person name="Kurokawa K."/>
            <person name="Ishii K."/>
            <person name="Yokoyama K."/>
            <person name="Han C.-G."/>
            <person name="Ohtsubo E."/>
            <person name="Nakayama K."/>
            <person name="Murata T."/>
            <person name="Tanaka M."/>
            <person name="Tobe T."/>
            <person name="Iida T."/>
            <person name="Takami H."/>
            <person name="Honda T."/>
            <person name="Sasakawa C."/>
            <person name="Ogasawara N."/>
            <person name="Yasunaga T."/>
            <person name="Kuhara S."/>
            <person name="Shiba T."/>
            <person name="Hattori M."/>
            <person name="Shinagawa H."/>
        </authorList>
    </citation>
    <scope>NUCLEOTIDE SEQUENCE [LARGE SCALE GENOMIC DNA]</scope>
    <source>
        <strain>O157:H7 / Sakai / RIMD 0509952 / EHEC</strain>
    </source>
</reference>